<gene>
    <name evidence="5" type="primary">ktnC</name>
    <name type="ORF">An04g09540</name>
</gene>
<protein>
    <recommendedName>
        <fullName evidence="6">Bicoumarin synthase ktnC</fullName>
        <ecNumber evidence="4">1.14.-.-</ecNumber>
    </recommendedName>
    <alternativeName>
        <fullName evidence="5">Cytochrome P450 monooxygenase ktnC</fullName>
    </alternativeName>
    <alternativeName>
        <fullName evidence="5">Kotanin biosynthesis cluster protein C</fullName>
    </alternativeName>
</protein>
<accession>A2QK67</accession>
<reference key="1">
    <citation type="journal article" date="2007" name="Nat. Biotechnol.">
        <title>Genome sequencing and analysis of the versatile cell factory Aspergillus niger CBS 513.88.</title>
        <authorList>
            <person name="Pel H.J."/>
            <person name="de Winde J.H."/>
            <person name="Archer D.B."/>
            <person name="Dyer P.S."/>
            <person name="Hofmann G."/>
            <person name="Schaap P.J."/>
            <person name="Turner G."/>
            <person name="de Vries R.P."/>
            <person name="Albang R."/>
            <person name="Albermann K."/>
            <person name="Andersen M.R."/>
            <person name="Bendtsen J.D."/>
            <person name="Benen J.A.E."/>
            <person name="van den Berg M."/>
            <person name="Breestraat S."/>
            <person name="Caddick M.X."/>
            <person name="Contreras R."/>
            <person name="Cornell M."/>
            <person name="Coutinho P.M."/>
            <person name="Danchin E.G.J."/>
            <person name="Debets A.J.M."/>
            <person name="Dekker P."/>
            <person name="van Dijck P.W.M."/>
            <person name="van Dijk A."/>
            <person name="Dijkhuizen L."/>
            <person name="Driessen A.J.M."/>
            <person name="d'Enfert C."/>
            <person name="Geysens S."/>
            <person name="Goosen C."/>
            <person name="Groot G.S.P."/>
            <person name="de Groot P.W.J."/>
            <person name="Guillemette T."/>
            <person name="Henrissat B."/>
            <person name="Herweijer M."/>
            <person name="van den Hombergh J.P.T.W."/>
            <person name="van den Hondel C.A.M.J.J."/>
            <person name="van der Heijden R.T.J.M."/>
            <person name="van der Kaaij R.M."/>
            <person name="Klis F.M."/>
            <person name="Kools H.J."/>
            <person name="Kubicek C.P."/>
            <person name="van Kuyk P.A."/>
            <person name="Lauber J."/>
            <person name="Lu X."/>
            <person name="van der Maarel M.J.E.C."/>
            <person name="Meulenberg R."/>
            <person name="Menke H."/>
            <person name="Mortimer M.A."/>
            <person name="Nielsen J."/>
            <person name="Oliver S.G."/>
            <person name="Olsthoorn M."/>
            <person name="Pal K."/>
            <person name="van Peij N.N.M.E."/>
            <person name="Ram A.F.J."/>
            <person name="Rinas U."/>
            <person name="Roubos J.A."/>
            <person name="Sagt C.M.J."/>
            <person name="Schmoll M."/>
            <person name="Sun J."/>
            <person name="Ussery D."/>
            <person name="Varga J."/>
            <person name="Vervecken W."/>
            <person name="van de Vondervoort P.J.J."/>
            <person name="Wedler H."/>
            <person name="Woesten H.A.B."/>
            <person name="Zeng A.-P."/>
            <person name="van Ooyen A.J.J."/>
            <person name="Visser J."/>
            <person name="Stam H."/>
        </authorList>
    </citation>
    <scope>NUCLEOTIDE SEQUENCE [LARGE SCALE GENOMIC DNA]</scope>
    <source>
        <strain>ATCC MYA-4892 / CBS 513.88 / FGSC A1513</strain>
    </source>
</reference>
<reference key="2">
    <citation type="journal article" date="2007" name="ChemBioChem">
        <title>Regio- and stereoselective intermolecular oxidative phenol coupling in kotanin biosynthesis by Aspergillus niger.</title>
        <authorList>
            <person name="Huettel W."/>
            <person name="Mueller M."/>
        </authorList>
    </citation>
    <scope>FUNCTION</scope>
</reference>
<reference key="3">
    <citation type="journal article" date="2012" name="Angew. Chem. Int. Ed.">
        <title>Regio- and stereoselective oxidative phenol coupling in Aspergillus niger.</title>
        <authorList>
            <person name="Gil Girol C."/>
            <person name="Fisch K.M."/>
            <person name="Heinekamp T."/>
            <person name="Guenther S."/>
            <person name="Huettel W."/>
            <person name="Piel J."/>
            <person name="Brakhage A.A."/>
            <person name="Mueller M."/>
        </authorList>
    </citation>
    <scope>FUNCTION</scope>
    <scope>DISRUPTION PHENOTYPE</scope>
    <scope>PATHWAY</scope>
</reference>
<reference key="4">
    <citation type="journal article" date="2015" name="J. Am. Chem. Soc.">
        <title>Cytochrome P450-catalyzed regio- and stereoselective phenol coupling of fungal natural products.</title>
        <authorList>
            <person name="Mazzaferro L.S."/>
            <person name="Huettel W."/>
            <person name="Fries A."/>
            <person name="Mueller M."/>
        </authorList>
    </citation>
    <scope>FUNCTION</scope>
    <scope>CATALYTIC ACTIVITY</scope>
    <scope>PATHWAY</scope>
</reference>
<proteinExistence type="evidence at protein level"/>
<comment type="function">
    <text evidence="2 3 4">Non-reducing polyketide synthase; part of the gene cluster that mediates the biosynthesis of the bicoumarin kotanin (PubMed:22945023, PubMed:26389790). The non-reducing polyketide synthase ktnS first catalyzes the formation of the pentaketidic 4,7-dihydroxy-5-methylcoumarin from acetyl coenzyme A and 4 malonyl coenzyme A molecules (PubMed:17315249, PubMed:22945023). Further O-methylation by ktnB leads to the formation of 7-demethylsiderin (PubMed:17315249, PubMed:22945023, PubMed:26389790). Then, an oxidative phenol coupling catalyzed by the cytochrome P450 monooxygenase ktnC forms the 8,8'-dimer P-orlandin via dimerization the monomeric precursor, 7-demethylsiderin (PubMed:26389790). P-orlandin is subsequently O-methylated in a stepwise fashion to demethylkotanin and kotanin (PubMed:22945023).</text>
</comment>
<comment type="catalytic activity">
    <reaction evidence="4">
        <text>2 7-demethylsiderin + NADPH + O2 = orlandin + NADP(+) + 2 H2O</text>
        <dbReference type="Rhea" id="RHEA:62800"/>
        <dbReference type="ChEBI" id="CHEBI:15377"/>
        <dbReference type="ChEBI" id="CHEBI:15379"/>
        <dbReference type="ChEBI" id="CHEBI:57783"/>
        <dbReference type="ChEBI" id="CHEBI:58349"/>
        <dbReference type="ChEBI" id="CHEBI:145991"/>
        <dbReference type="ChEBI" id="CHEBI:145992"/>
    </reaction>
    <physiologicalReaction direction="left-to-right" evidence="4">
        <dbReference type="Rhea" id="RHEA:62801"/>
    </physiologicalReaction>
</comment>
<comment type="cofactor">
    <cofactor evidence="1">
        <name>heme</name>
        <dbReference type="ChEBI" id="CHEBI:30413"/>
    </cofactor>
</comment>
<comment type="pathway">
    <text evidence="3 4">Secondary metabolite biosynthesis.</text>
</comment>
<comment type="disruption phenotype">
    <text evidence="3">Leads to complete loss in kotanin biosynthesis, but accumulates the monomeric intermediate 7-demethylsiderin (PubMed:22945023).</text>
</comment>
<comment type="similarity">
    <text evidence="7">Belongs to the cytochrome P450 family.</text>
</comment>
<evidence type="ECO:0000250" key="1">
    <source>
        <dbReference type="UniProtKB" id="P04798"/>
    </source>
</evidence>
<evidence type="ECO:0000269" key="2">
    <source>
    </source>
</evidence>
<evidence type="ECO:0000269" key="3">
    <source>
    </source>
</evidence>
<evidence type="ECO:0000269" key="4">
    <source>
    </source>
</evidence>
<evidence type="ECO:0000303" key="5">
    <source>
    </source>
</evidence>
<evidence type="ECO:0000303" key="6">
    <source>
    </source>
</evidence>
<evidence type="ECO:0000305" key="7"/>
<organism>
    <name type="scientific">Aspergillus niger (strain ATCC MYA-4892 / CBS 513.88 / FGSC A1513)</name>
    <dbReference type="NCBI Taxonomy" id="425011"/>
    <lineage>
        <taxon>Eukaryota</taxon>
        <taxon>Fungi</taxon>
        <taxon>Dikarya</taxon>
        <taxon>Ascomycota</taxon>
        <taxon>Pezizomycotina</taxon>
        <taxon>Eurotiomycetes</taxon>
        <taxon>Eurotiomycetidae</taxon>
        <taxon>Eurotiales</taxon>
        <taxon>Aspergillaceae</taxon>
        <taxon>Aspergillus</taxon>
        <taxon>Aspergillus subgen. Circumdati</taxon>
    </lineage>
</organism>
<dbReference type="EC" id="1.14.-.-" evidence="4"/>
<dbReference type="EMBL" id="AM270096">
    <property type="protein sequence ID" value="CAK47961.1"/>
    <property type="molecule type" value="Genomic_DNA"/>
</dbReference>
<dbReference type="RefSeq" id="XP_001402310.2">
    <property type="nucleotide sequence ID" value="XM_001402273.2"/>
</dbReference>
<dbReference type="SMR" id="A2QK67"/>
<dbReference type="EnsemblFungi" id="CAK47961">
    <property type="protein sequence ID" value="CAK47961"/>
    <property type="gene ID" value="An04g09540"/>
</dbReference>
<dbReference type="GeneID" id="4991357"/>
<dbReference type="KEGG" id="ang:An04g09540"/>
<dbReference type="VEuPathDB" id="FungiDB:An04g09540"/>
<dbReference type="HOGENOM" id="CLU_022195_8_0_1"/>
<dbReference type="Proteomes" id="UP000006706">
    <property type="component" value="Chromosome 6L"/>
</dbReference>
<dbReference type="GO" id="GO:0020037">
    <property type="term" value="F:heme binding"/>
    <property type="evidence" value="ECO:0007669"/>
    <property type="project" value="InterPro"/>
</dbReference>
<dbReference type="GO" id="GO:0005506">
    <property type="term" value="F:iron ion binding"/>
    <property type="evidence" value="ECO:0007669"/>
    <property type="project" value="InterPro"/>
</dbReference>
<dbReference type="GO" id="GO:0004497">
    <property type="term" value="F:monooxygenase activity"/>
    <property type="evidence" value="ECO:0000315"/>
    <property type="project" value="UniProt"/>
</dbReference>
<dbReference type="GO" id="GO:0016705">
    <property type="term" value="F:oxidoreductase activity, acting on paired donors, with incorporation or reduction of molecular oxygen"/>
    <property type="evidence" value="ECO:0007669"/>
    <property type="project" value="InterPro"/>
</dbReference>
<dbReference type="GO" id="GO:1900596">
    <property type="term" value="P:(+)-kotanin biosynthetic process"/>
    <property type="evidence" value="ECO:0000314"/>
    <property type="project" value="GO_Central"/>
</dbReference>
<dbReference type="CDD" id="cd11041">
    <property type="entry name" value="CYP503A1-like"/>
    <property type="match status" value="1"/>
</dbReference>
<dbReference type="Gene3D" id="1.10.630.10">
    <property type="entry name" value="Cytochrome P450"/>
    <property type="match status" value="1"/>
</dbReference>
<dbReference type="InterPro" id="IPR001128">
    <property type="entry name" value="Cyt_P450"/>
</dbReference>
<dbReference type="InterPro" id="IPR002403">
    <property type="entry name" value="Cyt_P450_E_grp-IV"/>
</dbReference>
<dbReference type="InterPro" id="IPR036396">
    <property type="entry name" value="Cyt_P450_sf"/>
</dbReference>
<dbReference type="PANTHER" id="PTHR46206">
    <property type="entry name" value="CYTOCHROME P450"/>
    <property type="match status" value="1"/>
</dbReference>
<dbReference type="Pfam" id="PF00067">
    <property type="entry name" value="p450"/>
    <property type="match status" value="1"/>
</dbReference>
<dbReference type="PRINTS" id="PR00465">
    <property type="entry name" value="EP450IV"/>
</dbReference>
<dbReference type="SUPFAM" id="SSF48264">
    <property type="entry name" value="Cytochrome P450"/>
    <property type="match status" value="1"/>
</dbReference>
<feature type="chain" id="PRO_0000442170" description="Bicoumarin synthase ktnC">
    <location>
        <begin position="1"/>
        <end position="420"/>
    </location>
</feature>
<feature type="binding site" description="axial binding residue" evidence="1">
    <location>
        <position position="362"/>
    </location>
    <ligand>
        <name>heme</name>
        <dbReference type="ChEBI" id="CHEBI:30413"/>
    </ligand>
    <ligandPart>
        <name>Fe</name>
        <dbReference type="ChEBI" id="CHEBI:18248"/>
    </ligandPart>
</feature>
<name>KTNC_ASPNC</name>
<sequence length="420" mass="47380">MHKSAALSLRDAQFADMNMYCDVTDRTPIEAVHSCNNAESLNILNKLLARETDTALSQIFEQPTGKDWKELNTLQTILSLCSTVTMALLLGPDTAPDPVLHHHSTSFGEAIMSSCYRRTGYPRILRPFVWRFSSECRNLRKHFSLVRERLVPEVARRVAAARAADKTKDVRPSSLLDALIAAAFDNGSLSPDDQGRNDAAQVQLLADDLIFYHFELCKPTAFNIIFQLYAIMDHPEYKAPLREEALQALKLTNGDWTVETLKHAPKLESFTKETFRLYDISGFVSFRRVMKPLTLNSIGLSLRPGTILLSPCRNVHLDPEIYEDPTTFNGYRFYDSSREVCSPRVATTSLTFLTFSHGAGSCPARVLATQICRTIFIKFLLQYDVEPVQKEILPYGFTSGPVYMPNPSVMMRIRPRSDGK</sequence>
<keyword id="KW-0349">Heme</keyword>
<keyword id="KW-0408">Iron</keyword>
<keyword id="KW-0479">Metal-binding</keyword>
<keyword id="KW-0503">Monooxygenase</keyword>
<keyword id="KW-0560">Oxidoreductase</keyword>
<keyword id="KW-1185">Reference proteome</keyword>